<proteinExistence type="inferred from homology"/>
<accession>B0WH96</accession>
<dbReference type="EC" id="4.1.1.130" evidence="1"/>
<dbReference type="EMBL" id="DS231933">
    <property type="protein sequence ID" value="EDS27554.1"/>
    <property type="molecule type" value="Genomic_DNA"/>
</dbReference>
<dbReference type="RefSeq" id="XP_001848061.1">
    <property type="nucleotide sequence ID" value="XM_001848009.1"/>
</dbReference>
<dbReference type="SMR" id="B0WH96"/>
<dbReference type="FunCoup" id="B0WH96">
    <property type="interactions" value="719"/>
</dbReference>
<dbReference type="STRING" id="7176.B0WH96"/>
<dbReference type="EnsemblMetazoa" id="CPIJ006564-RA">
    <property type="protein sequence ID" value="CPIJ006564-PA"/>
    <property type="gene ID" value="CPIJ006564"/>
</dbReference>
<dbReference type="KEGG" id="cqu:CpipJ_CPIJ006564"/>
<dbReference type="VEuPathDB" id="VectorBase:CPIJ006564"/>
<dbReference type="VEuPathDB" id="VectorBase:CQUJHB006863"/>
<dbReference type="eggNOG" id="KOG3244">
    <property type="taxonomic scope" value="Eukaryota"/>
</dbReference>
<dbReference type="HOGENOM" id="CLU_061241_1_1_1"/>
<dbReference type="InParanoid" id="B0WH96"/>
<dbReference type="OMA" id="YYERHFH"/>
<dbReference type="OrthoDB" id="417037at2759"/>
<dbReference type="PhylomeDB" id="B0WH96"/>
<dbReference type="UniPathway" id="UPA00232"/>
<dbReference type="Proteomes" id="UP000002320">
    <property type="component" value="Unassembled WGS sequence"/>
</dbReference>
<dbReference type="GO" id="GO:0031314">
    <property type="term" value="C:extrinsic component of mitochondrial inner membrane"/>
    <property type="evidence" value="ECO:0007669"/>
    <property type="project" value="UniProtKB-UniRule"/>
</dbReference>
<dbReference type="GO" id="GO:0006744">
    <property type="term" value="P:ubiquinone biosynthetic process"/>
    <property type="evidence" value="ECO:0007669"/>
    <property type="project" value="UniProtKB-UniRule"/>
</dbReference>
<dbReference type="HAMAP" id="MF_03111">
    <property type="entry name" value="Coq4"/>
    <property type="match status" value="1"/>
</dbReference>
<dbReference type="InterPro" id="IPR007715">
    <property type="entry name" value="Coq4"/>
</dbReference>
<dbReference type="InterPro" id="IPR027540">
    <property type="entry name" value="Coq4_euk"/>
</dbReference>
<dbReference type="PANTHER" id="PTHR12922">
    <property type="entry name" value="UBIQUINONE BIOSYNTHESIS PROTEIN"/>
    <property type="match status" value="1"/>
</dbReference>
<dbReference type="PANTHER" id="PTHR12922:SF7">
    <property type="entry name" value="UBIQUINONE BIOSYNTHESIS PROTEIN COQ4 HOMOLOG, MITOCHONDRIAL"/>
    <property type="match status" value="1"/>
</dbReference>
<dbReference type="Pfam" id="PF05019">
    <property type="entry name" value="Coq4"/>
    <property type="match status" value="1"/>
</dbReference>
<organism>
    <name type="scientific">Culex quinquefasciatus</name>
    <name type="common">Southern house mosquito</name>
    <name type="synonym">Culex pungens</name>
    <dbReference type="NCBI Taxonomy" id="7176"/>
    <lineage>
        <taxon>Eukaryota</taxon>
        <taxon>Metazoa</taxon>
        <taxon>Ecdysozoa</taxon>
        <taxon>Arthropoda</taxon>
        <taxon>Hexapoda</taxon>
        <taxon>Insecta</taxon>
        <taxon>Pterygota</taxon>
        <taxon>Neoptera</taxon>
        <taxon>Endopterygota</taxon>
        <taxon>Diptera</taxon>
        <taxon>Nematocera</taxon>
        <taxon>Culicoidea</taxon>
        <taxon>Culicidae</taxon>
        <taxon>Culicinae</taxon>
        <taxon>Culicini</taxon>
        <taxon>Culex</taxon>
        <taxon>Culex</taxon>
    </lineage>
</organism>
<protein>
    <recommendedName>
        <fullName>Ubiquinone biosynthesis protein COQ4 homolog 1, mitochondrial</fullName>
    </recommendedName>
    <alternativeName>
        <fullName>4-hydroxy-3-methoxy-5-polyprenylbenzoate decarboxylase</fullName>
        <ecNumber evidence="1">4.1.1.130</ecNumber>
    </alternativeName>
    <alternativeName>
        <fullName evidence="1">Coenzyme Q biosynthesis protein 4 homolog 1</fullName>
    </alternativeName>
</protein>
<feature type="transit peptide" description="Mitochondrion" evidence="1">
    <location>
        <begin position="1"/>
        <end position="18"/>
    </location>
</feature>
<feature type="chain" id="PRO_0000388059" description="Ubiquinone biosynthesis protein COQ4 homolog 1, mitochondrial">
    <location>
        <begin position="19"/>
        <end position="268"/>
    </location>
</feature>
<feature type="region of interest" description="Disordered" evidence="2">
    <location>
        <begin position="1"/>
        <end position="44"/>
    </location>
</feature>
<feature type="compositionally biased region" description="Basic residues" evidence="2">
    <location>
        <begin position="1"/>
        <end position="10"/>
    </location>
</feature>
<feature type="compositionally biased region" description="Low complexity" evidence="2">
    <location>
        <begin position="20"/>
        <end position="38"/>
    </location>
</feature>
<feature type="binding site" evidence="1">
    <location>
        <position position="177"/>
    </location>
    <ligand>
        <name>Zn(2+)</name>
        <dbReference type="ChEBI" id="CHEBI:29105"/>
    </ligand>
</feature>
<feature type="binding site" evidence="1">
    <location>
        <position position="178"/>
    </location>
    <ligand>
        <name>Zn(2+)</name>
        <dbReference type="ChEBI" id="CHEBI:29105"/>
    </ligand>
</feature>
<feature type="binding site" evidence="1">
    <location>
        <position position="181"/>
    </location>
    <ligand>
        <name>Zn(2+)</name>
        <dbReference type="ChEBI" id="CHEBI:29105"/>
    </ligand>
</feature>
<feature type="binding site" evidence="1">
    <location>
        <position position="193"/>
    </location>
    <ligand>
        <name>Zn(2+)</name>
        <dbReference type="ChEBI" id="CHEBI:29105"/>
    </ligand>
</feature>
<name>COQ41_CULQU</name>
<keyword id="KW-0456">Lyase</keyword>
<keyword id="KW-0472">Membrane</keyword>
<keyword id="KW-0479">Metal-binding</keyword>
<keyword id="KW-0496">Mitochondrion</keyword>
<keyword id="KW-0999">Mitochondrion inner membrane</keyword>
<keyword id="KW-1185">Reference proteome</keyword>
<keyword id="KW-0809">Transit peptide</keyword>
<keyword id="KW-0831">Ubiquinone biosynthesis</keyword>
<keyword id="KW-0862">Zinc</keyword>
<sequence length="268" mass="30569">MFLRRVHPVRLGHASQRSLTTTKSRNESTTTTVEAPQAAPSPPPDAFTEEFLRNQIKVTELQRVILGVGSSLAALVNPRRHDMIACLGETTGVPALDAIRRQMLASDEGRQILADRPRINTRTVDMAALKALPETSFGHQYVHFLEKHDITPDSRAEVRFMDDPELAYVMTRYREVHDLVHTVLGMPTNMLGEVAVKWVEALNTGLPMCYGGAVFGAQRQNYLRHYLPWALRMGRQVRPLMNVYWEKRWEQDMAELRQELNIEELVIN</sequence>
<evidence type="ECO:0000255" key="1">
    <source>
        <dbReference type="HAMAP-Rule" id="MF_03111"/>
    </source>
</evidence>
<evidence type="ECO:0000256" key="2">
    <source>
        <dbReference type="SAM" id="MobiDB-lite"/>
    </source>
</evidence>
<gene>
    <name type="ORF">CPIJ006564</name>
</gene>
<reference key="1">
    <citation type="submission" date="2007-03" db="EMBL/GenBank/DDBJ databases">
        <title>Annotation of Culex pipiens quinquefasciatus.</title>
        <authorList>
            <consortium name="The Broad Institute Genome Sequencing Platform"/>
            <person name="Atkinson P.W."/>
            <person name="Hemingway J."/>
            <person name="Christensen B.M."/>
            <person name="Higgs S."/>
            <person name="Kodira C.D."/>
            <person name="Hannick L.I."/>
            <person name="Megy K."/>
            <person name="O'Leary S.B."/>
            <person name="Pearson M."/>
            <person name="Haas B.J."/>
            <person name="Mauceli E."/>
            <person name="Wortman J.R."/>
            <person name="Lee N.H."/>
            <person name="Guigo R."/>
            <person name="Stanke M."/>
            <person name="Alvarado L."/>
            <person name="Amedeo P."/>
            <person name="Antoine C.H."/>
            <person name="Arensburger P."/>
            <person name="Bidwell S.L."/>
            <person name="Crawford M."/>
            <person name="Camaro F."/>
            <person name="Devon K."/>
            <person name="Engels R."/>
            <person name="Hammond M."/>
            <person name="Howarth C."/>
            <person name="Koehrsen M."/>
            <person name="Lawson D."/>
            <person name="Montgomery P."/>
            <person name="Nene V."/>
            <person name="Nusbaum C."/>
            <person name="Puiu D."/>
            <person name="Romero-Severson J."/>
            <person name="Severson D.W."/>
            <person name="Shumway M."/>
            <person name="Sisk P."/>
            <person name="Stolte C."/>
            <person name="Zeng Q."/>
            <person name="Eisenstadt E."/>
            <person name="Fraser-Liggett C.M."/>
            <person name="Strausberg R."/>
            <person name="Galagan J."/>
            <person name="Birren B."/>
            <person name="Collins F.H."/>
        </authorList>
    </citation>
    <scope>NUCLEOTIDE SEQUENCE [LARGE SCALE GENOMIC DNA]</scope>
    <source>
        <strain>JHB</strain>
    </source>
</reference>
<comment type="function">
    <text evidence="1">Lyase that catalyzes the C1-decarboxylation of 4-hydroxy-3-methoxy-5-(all-trans-polyprenyl)benzoic acid into 2-methoxy-6-(all-trans-polyprenyl)phenol during ubiquinone biosynthesis.</text>
</comment>
<comment type="catalytic activity">
    <reaction evidence="1">
        <text>a 4-hydroxy-3-methoxy-5-(all-trans-polyprenyl)benzoate + H(+) = a 2-methoxy-6-(all-trans-polyprenyl)phenol + CO2</text>
        <dbReference type="Rhea" id="RHEA:81179"/>
        <dbReference type="Rhea" id="RHEA-COMP:9551"/>
        <dbReference type="Rhea" id="RHEA-COMP:10931"/>
        <dbReference type="ChEBI" id="CHEBI:15378"/>
        <dbReference type="ChEBI" id="CHEBI:16526"/>
        <dbReference type="ChEBI" id="CHEBI:62731"/>
        <dbReference type="ChEBI" id="CHEBI:84443"/>
        <dbReference type="EC" id="4.1.1.130"/>
    </reaction>
</comment>
<comment type="cofactor">
    <cofactor evidence="1">
        <name>Zn(2+)</name>
        <dbReference type="ChEBI" id="CHEBI:29105"/>
    </cofactor>
</comment>
<comment type="pathway">
    <text evidence="1">Cofactor biosynthesis; ubiquinone biosynthesis.</text>
</comment>
<comment type="subunit">
    <text evidence="1">Component of a multi-subunit COQ enzyme complex.</text>
</comment>
<comment type="subcellular location">
    <subcellularLocation>
        <location evidence="1">Mitochondrion inner membrane</location>
        <topology evidence="1">Peripheral membrane protein</topology>
        <orientation evidence="1">Matrix side</orientation>
    </subcellularLocation>
</comment>
<comment type="similarity">
    <text evidence="1">Belongs to the COQ4 family.</text>
</comment>